<dbReference type="EC" id="3.4.21.-"/>
<dbReference type="EMBL" id="M62363">
    <property type="protein sequence ID" value="AAA25549.1"/>
    <property type="molecule type" value="Genomic_DNA"/>
</dbReference>
<dbReference type="PIR" id="A43608">
    <property type="entry name" value="SWQPA1"/>
</dbReference>
<dbReference type="SMR" id="P31631"/>
<dbReference type="STRING" id="75985.WC39_09550"/>
<dbReference type="MEROPS" id="S08.144"/>
<dbReference type="GO" id="GO:0009279">
    <property type="term" value="C:cell outer membrane"/>
    <property type="evidence" value="ECO:0007669"/>
    <property type="project" value="UniProtKB-SubCell"/>
</dbReference>
<dbReference type="GO" id="GO:0005886">
    <property type="term" value="C:plasma membrane"/>
    <property type="evidence" value="ECO:0007669"/>
    <property type="project" value="TreeGrafter"/>
</dbReference>
<dbReference type="GO" id="GO:0004252">
    <property type="term" value="F:serine-type endopeptidase activity"/>
    <property type="evidence" value="ECO:0007669"/>
    <property type="project" value="InterPro"/>
</dbReference>
<dbReference type="GO" id="GO:0016485">
    <property type="term" value="P:protein processing"/>
    <property type="evidence" value="ECO:0007669"/>
    <property type="project" value="TreeGrafter"/>
</dbReference>
<dbReference type="CDD" id="cd04848">
    <property type="entry name" value="Peptidases_S8_Autotransporter_serine_protease_like"/>
    <property type="match status" value="1"/>
</dbReference>
<dbReference type="Gene3D" id="2.40.128.130">
    <property type="entry name" value="Autotransporter beta-domain"/>
    <property type="match status" value="1"/>
</dbReference>
<dbReference type="Gene3D" id="3.40.50.200">
    <property type="entry name" value="Peptidase S8/S53 domain"/>
    <property type="match status" value="1"/>
</dbReference>
<dbReference type="InterPro" id="IPR005546">
    <property type="entry name" value="Autotransporte_beta"/>
</dbReference>
<dbReference type="InterPro" id="IPR036709">
    <property type="entry name" value="Autotransporte_beta_dom_sf"/>
</dbReference>
<dbReference type="InterPro" id="IPR000209">
    <property type="entry name" value="Peptidase_S8/S53_dom"/>
</dbReference>
<dbReference type="InterPro" id="IPR036852">
    <property type="entry name" value="Peptidase_S8/S53_dom_sf"/>
</dbReference>
<dbReference type="InterPro" id="IPR023828">
    <property type="entry name" value="Peptidase_S8_Ser-AS"/>
</dbReference>
<dbReference type="InterPro" id="IPR015500">
    <property type="entry name" value="Peptidase_S8_subtilisin-rel"/>
</dbReference>
<dbReference type="InterPro" id="IPR034061">
    <property type="entry name" value="Peptidases_S8_Autotransporter"/>
</dbReference>
<dbReference type="PANTHER" id="PTHR42884:SF14">
    <property type="entry name" value="NEUROENDOCRINE CONVERTASE 1"/>
    <property type="match status" value="1"/>
</dbReference>
<dbReference type="PANTHER" id="PTHR42884">
    <property type="entry name" value="PROPROTEIN CONVERTASE SUBTILISIN/KEXIN-RELATED"/>
    <property type="match status" value="1"/>
</dbReference>
<dbReference type="Pfam" id="PF03797">
    <property type="entry name" value="Autotransporter"/>
    <property type="match status" value="1"/>
</dbReference>
<dbReference type="Pfam" id="PF00082">
    <property type="entry name" value="Peptidase_S8"/>
    <property type="match status" value="1"/>
</dbReference>
<dbReference type="PRINTS" id="PR00723">
    <property type="entry name" value="SUBTILISIN"/>
</dbReference>
<dbReference type="SMART" id="SM00869">
    <property type="entry name" value="Autotransporter"/>
    <property type="match status" value="1"/>
</dbReference>
<dbReference type="SUPFAM" id="SSF103515">
    <property type="entry name" value="Autotransporter"/>
    <property type="match status" value="1"/>
</dbReference>
<dbReference type="SUPFAM" id="SSF52743">
    <property type="entry name" value="Subtilisin-like"/>
    <property type="match status" value="1"/>
</dbReference>
<dbReference type="PROSITE" id="PS51208">
    <property type="entry name" value="AUTOTRANSPORTER"/>
    <property type="match status" value="1"/>
</dbReference>
<dbReference type="PROSITE" id="PS51892">
    <property type="entry name" value="SUBTILASE"/>
    <property type="match status" value="1"/>
</dbReference>
<dbReference type="PROSITE" id="PS00138">
    <property type="entry name" value="SUBTILASE_SER"/>
    <property type="match status" value="1"/>
</dbReference>
<keyword id="KW-0998">Cell outer membrane</keyword>
<keyword id="KW-0903">Direct protein sequencing</keyword>
<keyword id="KW-0378">Hydrolase</keyword>
<keyword id="KW-0472">Membrane</keyword>
<keyword id="KW-0645">Protease</keyword>
<keyword id="KW-0720">Serine protease</keyword>
<keyword id="KW-0732">Signal</keyword>
<accession>P31631</accession>
<protein>
    <recommendedName>
        <fullName>Serotype-specific antigen 1</fullName>
        <ecNumber>3.4.21.-</ecNumber>
    </recommendedName>
</protein>
<gene>
    <name type="primary">ssa1</name>
</gene>
<proteinExistence type="evidence at protein level"/>
<reference key="1">
    <citation type="journal article" date="1991" name="Infect. Immun.">
        <title>Molecular studies of Ssa1, a serotype-specific antigen of Pasteurella haemolytica A1.</title>
        <authorList>
            <person name="Lo R.Y.C."/>
            <person name="Strathdee C.A."/>
            <person name="Shewen P.E."/>
            <person name="Cooney B.J."/>
        </authorList>
    </citation>
    <scope>NUCLEOTIDE SEQUENCE [GENOMIC DNA]</scope>
    <scope>PROTEIN SEQUENCE OF 58-64</scope>
    <source>
        <strain>Serotype A1</strain>
    </source>
</reference>
<organism>
    <name type="scientific">Mannheimia haemolytica</name>
    <name type="common">Pasteurella haemolytica</name>
    <dbReference type="NCBI Taxonomy" id="75985"/>
    <lineage>
        <taxon>Bacteria</taxon>
        <taxon>Pseudomonadati</taxon>
        <taxon>Pseudomonadota</taxon>
        <taxon>Gammaproteobacteria</taxon>
        <taxon>Pasteurellales</taxon>
        <taxon>Pasteurellaceae</taxon>
        <taxon>Mannheimia</taxon>
    </lineage>
</organism>
<evidence type="ECO:0000255" key="1"/>
<evidence type="ECO:0000255" key="2">
    <source>
        <dbReference type="PROSITE-ProRule" id="PRU00556"/>
    </source>
</evidence>
<evidence type="ECO:0000255" key="3">
    <source>
        <dbReference type="PROSITE-ProRule" id="PRU01240"/>
    </source>
</evidence>
<evidence type="ECO:0000305" key="4"/>
<comment type="subcellular location">
    <subcellularLocation>
        <location>Cell outer membrane</location>
    </subcellularLocation>
</comment>
<comment type="similarity">
    <text evidence="4">Belongs to the peptidase S8 family.</text>
</comment>
<sequence>MYKIKHSFNKTLIAISISSFLSIAYATESIENPQPIIQLSESLSSKYSGKGVKLGVMDEGFMVKHPRHSSHLHPLIHQLTTPEGEVRIYDASYPQFEVNPVEKEDGIDLIPSLETHGAGVAGIIAAQADKTLGDGYSGGIAKGAELYVATKSYKRTLEKVIQDAKKELENAKDEEDEKTPSLDQMAKNDLLASKEKEMAIERAEWASGLNKLLDNNVFAINNSWNPFSISDDINVVDKFYQSIKQNKHNPLLQAIMRAKNSNTLLVFAAGNESKKQPGVMALLPRYFPELEKNLISAVAVDKEQKIASYSNHCGASKNWCVAAPGDLHVLIGVADEHKKPQYGLTKEQGTSFSAPAITASLAVLKERFDYLTATQIRDTLLTTATDLGEKGVDNVYGWGLINLKKAVNGPTQFLNDETITVTRDDHWSNPLASQFKITKKGDKSLHLDGENHLDTVAVEEGRLALNGKTKVKTISNHANLAVNGTEVEQNYSSSGQSQLEVLGKSGLIANAQANIHLAGSLKIDDKLTEKTEAGDVSATVVQLKDKATYQGGFTQLVENENLAKRGLIQDLYFKESEIIAKVNKPLTDEKADTNGQAGLALLNALRTTPIAYRRSWYNGWLQSALEQRKLDNLHYAVSNNIYADSLELLRSQNRKGLTQAQQHLFTAYHTPLQTTVWAEHLNQKQSASSKHTDVKHHQSQLGVNHKLADKTVLSATLSQQKNRLEKPFAQATLKQTALNIGLRYHLDNAWFSEATLQFARQKYQQSRRFASHQLGTAETRGSTLGGEMRIGYQFMPNQWIIEPSLGVQWIQTKMNGLNESGELATQTAAMRYRDVNIVPSVKLQRTFQLEQGSISPYIGLNYLHRLNGKITKITSNIAGKTLHSEATTKRNRQLNGEVGVKLHYKNWFTAMNLDYSRVKSCKPIWLESKCWL</sequence>
<name>SSA1_MANHA</name>
<feature type="signal peptide" evidence="1">
    <location>
        <begin position="1"/>
        <end position="24"/>
    </location>
</feature>
<feature type="chain" id="PRO_0000027167" description="Serotype-specific antigen 1">
    <location>
        <begin position="25"/>
        <end position="932"/>
    </location>
</feature>
<feature type="domain" description="Peptidase S8" evidence="3">
    <location>
        <begin position="25"/>
        <end position="407"/>
    </location>
</feature>
<feature type="domain" description="Autotransporter" evidence="2">
    <location>
        <begin position="669"/>
        <end position="932"/>
    </location>
</feature>
<feature type="active site" description="Charge relay system" evidence="3">
    <location>
        <position position="58"/>
    </location>
</feature>
<feature type="active site" description="Charge relay system" evidence="3">
    <location>
        <position position="116"/>
    </location>
</feature>
<feature type="active site" description="Charge relay system" evidence="3">
    <location>
        <position position="351"/>
    </location>
</feature>
<feature type="sequence conflict" description="In Ref. 1; AA sequence." evidence="4" ref="1">
    <original>M</original>
    <variation>V</variation>
    <location>
        <position position="62"/>
    </location>
</feature>